<name>PEPC_RABIT</name>
<evidence type="ECO:0000250" key="1"/>
<evidence type="ECO:0000255" key="2">
    <source>
        <dbReference type="PROSITE-ProRule" id="PRU01103"/>
    </source>
</evidence>
<evidence type="ECO:0000255" key="3">
    <source>
        <dbReference type="PROSITE-ProRule" id="PRU10094"/>
    </source>
</evidence>
<evidence type="ECO:0000305" key="4"/>
<feature type="signal peptide" evidence="1">
    <location>
        <begin position="1"/>
        <end position="16"/>
    </location>
</feature>
<feature type="propeptide" id="PRO_0000026067" description="Activation peptide" evidence="1">
    <location>
        <begin position="17"/>
        <end position="59"/>
    </location>
</feature>
<feature type="chain" id="PRO_0000026068" description="Gastricsin">
    <location>
        <begin position="60"/>
        <end position="388"/>
    </location>
</feature>
<feature type="domain" description="Peptidase A1" evidence="2">
    <location>
        <begin position="73"/>
        <end position="385"/>
    </location>
</feature>
<feature type="active site" evidence="3">
    <location>
        <position position="91"/>
    </location>
</feature>
<feature type="active site" evidence="3">
    <location>
        <position position="276"/>
    </location>
</feature>
<feature type="disulfide bond" evidence="1">
    <location>
        <begin position="104"/>
        <end position="109"/>
    </location>
</feature>
<feature type="disulfide bond" evidence="1">
    <location>
        <begin position="267"/>
        <end position="271"/>
    </location>
</feature>
<feature type="disulfide bond" evidence="1">
    <location>
        <begin position="310"/>
        <end position="343"/>
    </location>
</feature>
<dbReference type="EC" id="3.4.23.3"/>
<dbReference type="EMBL" id="AB047250">
    <property type="protein sequence ID" value="BAB11756.1"/>
    <property type="molecule type" value="mRNA"/>
</dbReference>
<dbReference type="RefSeq" id="NP_001076103.1">
    <property type="nucleotide sequence ID" value="NM_001082634.2"/>
</dbReference>
<dbReference type="SMR" id="Q9GMY2"/>
<dbReference type="FunCoup" id="Q9GMY2">
    <property type="interactions" value="19"/>
</dbReference>
<dbReference type="MEROPS" id="A01.003"/>
<dbReference type="GeneID" id="100009323"/>
<dbReference type="KEGG" id="ocu:100009323"/>
<dbReference type="CTD" id="5225"/>
<dbReference type="InParanoid" id="Q9GMY2"/>
<dbReference type="OrthoDB" id="771136at2759"/>
<dbReference type="Proteomes" id="UP000001811">
    <property type="component" value="Unplaced"/>
</dbReference>
<dbReference type="GO" id="GO:0005615">
    <property type="term" value="C:extracellular space"/>
    <property type="evidence" value="ECO:0007669"/>
    <property type="project" value="TreeGrafter"/>
</dbReference>
<dbReference type="GO" id="GO:0004190">
    <property type="term" value="F:aspartic-type endopeptidase activity"/>
    <property type="evidence" value="ECO:0007669"/>
    <property type="project" value="UniProtKB-KW"/>
</dbReference>
<dbReference type="GO" id="GO:0007586">
    <property type="term" value="P:digestion"/>
    <property type="evidence" value="ECO:0007669"/>
    <property type="project" value="UniProtKB-KW"/>
</dbReference>
<dbReference type="GO" id="GO:0006508">
    <property type="term" value="P:proteolysis"/>
    <property type="evidence" value="ECO:0007669"/>
    <property type="project" value="UniProtKB-KW"/>
</dbReference>
<dbReference type="FunFam" id="2.40.70.10:FF:000006">
    <property type="entry name" value="Cathepsin E"/>
    <property type="match status" value="1"/>
</dbReference>
<dbReference type="FunFam" id="2.40.70.10:FF:000004">
    <property type="entry name" value="Pepsin A"/>
    <property type="match status" value="1"/>
</dbReference>
<dbReference type="Gene3D" id="6.10.140.60">
    <property type="match status" value="1"/>
</dbReference>
<dbReference type="Gene3D" id="2.40.70.10">
    <property type="entry name" value="Acid Proteases"/>
    <property type="match status" value="2"/>
</dbReference>
<dbReference type="InterPro" id="IPR001461">
    <property type="entry name" value="Aspartic_peptidase_A1"/>
</dbReference>
<dbReference type="InterPro" id="IPR001969">
    <property type="entry name" value="Aspartic_peptidase_AS"/>
</dbReference>
<dbReference type="InterPro" id="IPR012848">
    <property type="entry name" value="Aspartic_peptidase_N"/>
</dbReference>
<dbReference type="InterPro" id="IPR033121">
    <property type="entry name" value="PEPTIDASE_A1"/>
</dbReference>
<dbReference type="InterPro" id="IPR021109">
    <property type="entry name" value="Peptidase_aspartic_dom_sf"/>
</dbReference>
<dbReference type="PANTHER" id="PTHR47966">
    <property type="entry name" value="BETA-SITE APP-CLEAVING ENZYME, ISOFORM A-RELATED"/>
    <property type="match status" value="1"/>
</dbReference>
<dbReference type="PANTHER" id="PTHR47966:SF72">
    <property type="entry name" value="GASTRICSIN"/>
    <property type="match status" value="1"/>
</dbReference>
<dbReference type="Pfam" id="PF07966">
    <property type="entry name" value="A1_Propeptide"/>
    <property type="match status" value="1"/>
</dbReference>
<dbReference type="Pfam" id="PF00026">
    <property type="entry name" value="Asp"/>
    <property type="match status" value="1"/>
</dbReference>
<dbReference type="PRINTS" id="PR00792">
    <property type="entry name" value="PEPSIN"/>
</dbReference>
<dbReference type="SUPFAM" id="SSF50630">
    <property type="entry name" value="Acid proteases"/>
    <property type="match status" value="1"/>
</dbReference>
<dbReference type="PROSITE" id="PS00141">
    <property type="entry name" value="ASP_PROTEASE"/>
    <property type="match status" value="2"/>
</dbReference>
<dbReference type="PROSITE" id="PS51767">
    <property type="entry name" value="PEPTIDASE_A1"/>
    <property type="match status" value="1"/>
</dbReference>
<reference key="1">
    <citation type="journal article" date="2001" name="Mol. Phylogenet. Evol.">
        <title>Phylogenetic position of Eulipotyphla inferred from the cDNA sequences of pepsinogens A and C.</title>
        <authorList>
            <person name="Narita Y."/>
            <person name="Oda S."/>
            <person name="Takenaka O."/>
            <person name="Kageyama T."/>
        </authorList>
    </citation>
    <scope>NUCLEOTIDE SEQUENCE [MRNA]</scope>
</reference>
<proteinExistence type="evidence at transcript level"/>
<comment type="function">
    <text>Hydrolyzes a variety of proteins.</text>
</comment>
<comment type="catalytic activity">
    <reaction>
        <text>More restricted specificity than pepsin A, but shows preferential cleavage at Tyr-|-Xaa bonds. High activity on hemoglobin.</text>
        <dbReference type="EC" id="3.4.23.3"/>
    </reaction>
</comment>
<comment type="subcellular location">
    <subcellularLocation>
        <location>Secreted</location>
    </subcellularLocation>
</comment>
<comment type="similarity">
    <text evidence="4">Belongs to the peptidase A1 family.</text>
</comment>
<accession>Q9GMY2</accession>
<protein>
    <recommendedName>
        <fullName>Gastricsin</fullName>
        <ecNumber>3.4.23.3</ecNumber>
    </recommendedName>
    <alternativeName>
        <fullName>Pepsinogen C</fullName>
    </alternativeName>
</protein>
<organism>
    <name type="scientific">Oryctolagus cuniculus</name>
    <name type="common">Rabbit</name>
    <dbReference type="NCBI Taxonomy" id="9986"/>
    <lineage>
        <taxon>Eukaryota</taxon>
        <taxon>Metazoa</taxon>
        <taxon>Chordata</taxon>
        <taxon>Craniata</taxon>
        <taxon>Vertebrata</taxon>
        <taxon>Euteleostomi</taxon>
        <taxon>Mammalia</taxon>
        <taxon>Eutheria</taxon>
        <taxon>Euarchontoglires</taxon>
        <taxon>Glires</taxon>
        <taxon>Lagomorpha</taxon>
        <taxon>Leporidae</taxon>
        <taxon>Oryctolagus</taxon>
    </lineage>
</organism>
<keyword id="KW-0064">Aspartyl protease</keyword>
<keyword id="KW-0222">Digestion</keyword>
<keyword id="KW-1015">Disulfide bond</keyword>
<keyword id="KW-0378">Hydrolase</keyword>
<keyword id="KW-0645">Protease</keyword>
<keyword id="KW-1185">Reference proteome</keyword>
<keyword id="KW-0964">Secreted</keyword>
<keyword id="KW-0732">Signal</keyword>
<keyword id="KW-0865">Zymogen</keyword>
<gene>
    <name type="primary">PGC</name>
    <name type="synonym">PGNC</name>
</gene>
<sequence>MKWLLVALVCLHLLEAAVIKVPLRKFKSIRETLKEKGLLKEFLNTHKYDPALKYRFGDFSVTYEPMDYLDAAYFGEISIGTPSQNFLVLFDTGSSNLWVPSVYCQSEACTTHNRFNPSKSSTFYTYDQTFSLEYGSGSLTGFFGYDTFTIQNIEVPNQEFGLSETEPGTNFLYAEFDGIMGLAYPSLSVGDATPALQGMVQDGTISSSVFSFYLSSQQGTDGGALVLGGVDSSLYTGDIYWAPVTRELYWQIGIDEFLISSEASGWCSQGCQAIVDTGTSLLTVPQEYMSDLLEATGAQENEYGEFLVDCDSTESLPTFTFVINGVEFPLSPSAYILNTDGQCMVGVEATYLSSQDGEPLWILGDVFLRAYYSVFDMANNRVGFAALA</sequence>